<comment type="function">
    <text evidence="2">May participate in the recruitment of inflammatory cells by injured or infected tissue. GCP-2(1-78) and, more potent, GCP-2(9-78) attract neutrophils and are involved in neutrophil activation.</text>
</comment>
<comment type="subunit">
    <text evidence="1">Monomer. Homodimer.</text>
</comment>
<comment type="subcellular location">
    <subcellularLocation>
        <location>Secreted</location>
    </subcellularLocation>
</comment>
<comment type="induction">
    <text>By lipopolysaccharide (LPS).</text>
</comment>
<comment type="PTM">
    <text evidence="2 3">GCP-2(1-78) and GCP-2(9-78) are produced by proteolytic cleavage after secretion from fibroblasts and epithelial cells. GCP-2(9-78) is the most prominent form. A number of additional N-terminal (processed between pos. 41 and 48) and C-terminal (processed between pos. 118 and 132) processed forms have been identified, probably also representing intermediate states.</text>
</comment>
<comment type="similarity">
    <text evidence="4">Belongs to the intercrine alpha (chemokine CxC) family.</text>
</comment>
<organism>
    <name type="scientific">Mus musculus</name>
    <name type="common">Mouse</name>
    <dbReference type="NCBI Taxonomy" id="10090"/>
    <lineage>
        <taxon>Eukaryota</taxon>
        <taxon>Metazoa</taxon>
        <taxon>Chordata</taxon>
        <taxon>Craniata</taxon>
        <taxon>Vertebrata</taxon>
        <taxon>Euteleostomi</taxon>
        <taxon>Mammalia</taxon>
        <taxon>Eutheria</taxon>
        <taxon>Euarchontoglires</taxon>
        <taxon>Glires</taxon>
        <taxon>Rodentia</taxon>
        <taxon>Myomorpha</taxon>
        <taxon>Muroidea</taxon>
        <taxon>Muridae</taxon>
        <taxon>Murinae</taxon>
        <taxon>Mus</taxon>
        <taxon>Mus</taxon>
    </lineage>
</organism>
<evidence type="ECO:0000250" key="1">
    <source>
        <dbReference type="UniProtKB" id="P42830"/>
    </source>
</evidence>
<evidence type="ECO:0000269" key="2">
    <source>
    </source>
</evidence>
<evidence type="ECO:0000269" key="3">
    <source>
    </source>
</evidence>
<evidence type="ECO:0000305" key="4"/>
<accession>P50228</accession>
<accession>Q8K3I3</accession>
<protein>
    <recommendedName>
        <fullName>C-X-C motif chemokine 5</fullName>
    </recommendedName>
    <alternativeName>
        <fullName>Cytokine LIX</fullName>
    </alternativeName>
    <alternativeName>
        <fullName>Small-inducible cytokine B5</fullName>
    </alternativeName>
    <component>
        <recommendedName>
            <fullName>GCP-2(1-78)</fullName>
        </recommendedName>
    </component>
    <component>
        <recommendedName>
            <fullName>GCP-2(9-78)</fullName>
        </recommendedName>
    </component>
</protein>
<reference key="1">
    <citation type="journal article" date="1995" name="J. Biol. Chem.">
        <title>Glucocorticoid-attenuated response genes encode intercellular mediators, including a new C-X-C chemokine.</title>
        <authorList>
            <person name="Smith J.B."/>
            <person name="Herschman H.R."/>
        </authorList>
    </citation>
    <scope>NUCLEOTIDE SEQUENCE [MRNA]</scope>
</reference>
<reference key="2">
    <citation type="journal article" date="2002" name="Immunogenetics">
        <title>Cloning and genomic localization of the murine LPS-induced CXC chemokine (LIX) gene, Scyb5.</title>
        <authorList>
            <person name="Smith J.B."/>
            <person name="Wadleigh D.J."/>
            <person name="Xia Y.-R."/>
            <person name="Mar R.A."/>
            <person name="Herschman H.R."/>
            <person name="Lusis A.J."/>
        </authorList>
    </citation>
    <scope>NUCLEOTIDE SEQUENCE [GENOMIC DNA]</scope>
    <source>
        <strain>129/Sv</strain>
    </source>
</reference>
<reference key="3">
    <citation type="journal article" date="2009" name="PLoS Biol.">
        <title>Lineage-specific biology revealed by a finished genome assembly of the mouse.</title>
        <authorList>
            <person name="Church D.M."/>
            <person name="Goodstadt L."/>
            <person name="Hillier L.W."/>
            <person name="Zody M.C."/>
            <person name="Goldstein S."/>
            <person name="She X."/>
            <person name="Bult C.J."/>
            <person name="Agarwala R."/>
            <person name="Cherry J.L."/>
            <person name="DiCuccio M."/>
            <person name="Hlavina W."/>
            <person name="Kapustin Y."/>
            <person name="Meric P."/>
            <person name="Maglott D."/>
            <person name="Birtle Z."/>
            <person name="Marques A.C."/>
            <person name="Graves T."/>
            <person name="Zhou S."/>
            <person name="Teague B."/>
            <person name="Potamousis K."/>
            <person name="Churas C."/>
            <person name="Place M."/>
            <person name="Herschleb J."/>
            <person name="Runnheim R."/>
            <person name="Forrest D."/>
            <person name="Amos-Landgraf J."/>
            <person name="Schwartz D.C."/>
            <person name="Cheng Z."/>
            <person name="Lindblad-Toh K."/>
            <person name="Eichler E.E."/>
            <person name="Ponting C.P."/>
        </authorList>
    </citation>
    <scope>NUCLEOTIDE SEQUENCE [LARGE SCALE GENOMIC DNA]</scope>
    <source>
        <strain>C57BL/6J</strain>
    </source>
</reference>
<reference key="4">
    <citation type="journal article" date="2004" name="Genome Res.">
        <title>The status, quality, and expansion of the NIH full-length cDNA project: the Mammalian Gene Collection (MGC).</title>
        <authorList>
            <consortium name="The MGC Project Team"/>
        </authorList>
    </citation>
    <scope>NUCLEOTIDE SEQUENCE [LARGE SCALE MRNA]</scope>
    <source>
        <strain>FVB/N</strain>
        <tissue>Mammary gland</tissue>
    </source>
</reference>
<reference key="5">
    <citation type="journal article" date="1996" name="J. Immunol.">
        <title>Identification of mouse granulocyte chemotactic protein-2 from fibroblasts and epithelial cells. Functional comparison with natural KC and macrophage inflammatory protein-2.</title>
        <authorList>
            <person name="Wuyts A."/>
            <person name="Haelens A."/>
            <person name="Proost P."/>
            <person name="Lenaerts J.-P."/>
            <person name="Conings R."/>
            <person name="Opdenakker G."/>
            <person name="Van Damme J."/>
        </authorList>
    </citation>
    <scope>PROTEIN SEQUENCE OF 41-118</scope>
    <scope>IDENTIFICATION OF GCP-2(1-78)</scope>
    <scope>PROTEOLYTIC PROCESSING OF N-TERMINUS</scope>
</reference>
<reference key="6">
    <citation type="journal article" date="1999" name="J. Immunol.">
        <title>NH2- and COOH-terminal truncations of murine granulocyte chemotactic protein-2 augment the in vitro and in vivo neutrophil chemotactic potency.</title>
        <authorList>
            <person name="Wuyts A."/>
            <person name="D'Haese A."/>
            <person name="Cremers V."/>
            <person name="Menten P."/>
            <person name="Lenaerts J.-P."/>
            <person name="De Loof A."/>
            <person name="Heremans H."/>
            <person name="Proost P."/>
            <person name="Van Damme J."/>
        </authorList>
    </citation>
    <scope>PROTEIN SEQUENCE OF 49-55</scope>
    <scope>IDENTIFICATION OF GCP-2(9-78) BY MASS SPECTROMETRY</scope>
    <scope>FUNCTION</scope>
    <scope>PROTEOLYTIC PROCESSING OF N-TERMINUS AND C-TERMINAL</scope>
    <source>
        <tissue>Fibroblast</tissue>
    </source>
</reference>
<feature type="signal peptide" evidence="3">
    <location>
        <begin position="1"/>
        <end position="40"/>
    </location>
</feature>
<feature type="chain" id="PRO_0000005078" description="C-X-C motif chemokine 5">
    <location>
        <begin position="41"/>
        <end position="132"/>
    </location>
</feature>
<feature type="chain" id="PRO_0000005079" description="GCP-2(1-78)">
    <location>
        <begin position="41"/>
        <end position="118"/>
    </location>
</feature>
<feature type="chain" id="PRO_0000005080" description="GCP-2(9-78)">
    <location>
        <begin position="49"/>
        <end position="118"/>
    </location>
</feature>
<feature type="disulfide bond" evidence="1">
    <location>
        <begin position="53"/>
        <end position="79"/>
    </location>
</feature>
<feature type="disulfide bond" evidence="1">
    <location>
        <begin position="55"/>
        <end position="95"/>
    </location>
</feature>
<feature type="sequence conflict" description="In Ref. 1; AAC52238 and 4; AAH24392." evidence="4" ref="1 4">
    <original>R</original>
    <variation>H</variation>
    <location>
        <position position="10"/>
    </location>
</feature>
<feature type="sequence conflict" description="In Ref. 1; AAC52238 and 4; AAH24392." evidence="4" ref="1 4">
    <original>I</original>
    <variation>S</variation>
    <location>
        <position position="16"/>
    </location>
</feature>
<feature type="sequence conflict" description="In Ref. 5; AA sequence." evidence="4" ref="5">
    <original>TV</original>
    <variation>N</variation>
    <location>
        <begin position="81"/>
        <end position="82"/>
    </location>
</feature>
<keyword id="KW-0145">Chemotaxis</keyword>
<keyword id="KW-0202">Cytokine</keyword>
<keyword id="KW-0903">Direct protein sequencing</keyword>
<keyword id="KW-1015">Disulfide bond</keyword>
<keyword id="KW-0395">Inflammatory response</keyword>
<keyword id="KW-1185">Reference proteome</keyword>
<keyword id="KW-0964">Secreted</keyword>
<keyword id="KW-0732">Signal</keyword>
<name>CXCL5_MOUSE</name>
<proteinExistence type="evidence at protein level"/>
<sequence>MSLQLRSSARIPSGSISPFMRMAPLAFLLLFTLPQHLAEAAPSSVIAATELRCVCLTVTPKINPKLIANLEVIPAGPQCPTVEVIAKLKNQKEVCLDPEAPVIKKIIQKILGSDKKKAKRNALAVERTASVQ</sequence>
<gene>
    <name type="primary">Cxcl5</name>
    <name type="synonym">Scyb5</name>
</gene>
<dbReference type="EMBL" id="U27267">
    <property type="protein sequence ID" value="AAC52238.1"/>
    <property type="molecule type" value="mRNA"/>
</dbReference>
<dbReference type="EMBL" id="AY100019">
    <property type="protein sequence ID" value="AAM48589.1"/>
    <property type="molecule type" value="Genomic_DNA"/>
</dbReference>
<dbReference type="EMBL" id="AC105995">
    <property type="status" value="NOT_ANNOTATED_CDS"/>
    <property type="molecule type" value="Genomic_DNA"/>
</dbReference>
<dbReference type="EMBL" id="BC024392">
    <property type="protein sequence ID" value="AAH24392.1"/>
    <property type="molecule type" value="mRNA"/>
</dbReference>
<dbReference type="CCDS" id="CCDS19414.1"/>
<dbReference type="PIR" id="A57325">
    <property type="entry name" value="A57325"/>
</dbReference>
<dbReference type="RefSeq" id="NP_033167.2">
    <property type="nucleotide sequence ID" value="NM_009141.3"/>
</dbReference>
<dbReference type="SMR" id="P50228"/>
<dbReference type="FunCoup" id="P50228">
    <property type="interactions" value="1065"/>
</dbReference>
<dbReference type="STRING" id="10090.ENSMUSP00000031318"/>
<dbReference type="iPTMnet" id="P50228"/>
<dbReference type="PhosphoSitePlus" id="P50228"/>
<dbReference type="PaxDb" id="10090-ENSMUSP00000031318"/>
<dbReference type="ProteomicsDB" id="279221"/>
<dbReference type="ABCD" id="P50228">
    <property type="antibodies" value="2 sequenced antibodies"/>
</dbReference>
<dbReference type="Antibodypedia" id="13323">
    <property type="antibodies" value="287 antibodies from 23 providers"/>
</dbReference>
<dbReference type="DNASU" id="20311"/>
<dbReference type="Ensembl" id="ENSMUST00000031318.6">
    <property type="protein sequence ID" value="ENSMUSP00000031318.5"/>
    <property type="gene ID" value="ENSMUSG00000029371.8"/>
</dbReference>
<dbReference type="GeneID" id="20311"/>
<dbReference type="KEGG" id="mmu:20311"/>
<dbReference type="UCSC" id="uc008ybg.2">
    <property type="organism name" value="mouse"/>
</dbReference>
<dbReference type="AGR" id="MGI:1096868"/>
<dbReference type="CTD" id="6374"/>
<dbReference type="MGI" id="MGI:1096868">
    <property type="gene designation" value="Cxcl5"/>
</dbReference>
<dbReference type="VEuPathDB" id="HostDB:ENSMUSG00000029371"/>
<dbReference type="eggNOG" id="ENOG502S7MM">
    <property type="taxonomic scope" value="Eukaryota"/>
</dbReference>
<dbReference type="GeneTree" id="ENSGT00940000162749"/>
<dbReference type="HOGENOM" id="CLU_143902_1_0_1"/>
<dbReference type="InParanoid" id="P50228"/>
<dbReference type="OMA" id="MPRVNAK"/>
<dbReference type="OrthoDB" id="8872899at2759"/>
<dbReference type="PhylomeDB" id="P50228"/>
<dbReference type="TreeFam" id="TF333433"/>
<dbReference type="Reactome" id="R-MMU-380108">
    <property type="pathway name" value="Chemokine receptors bind chemokines"/>
</dbReference>
<dbReference type="Reactome" id="R-MMU-418594">
    <property type="pathway name" value="G alpha (i) signalling events"/>
</dbReference>
<dbReference type="BioGRID-ORCS" id="20311">
    <property type="hits" value="2 hits in 80 CRISPR screens"/>
</dbReference>
<dbReference type="PRO" id="PR:P50228"/>
<dbReference type="Proteomes" id="UP000000589">
    <property type="component" value="Chromosome 5"/>
</dbReference>
<dbReference type="RNAct" id="P50228">
    <property type="molecule type" value="protein"/>
</dbReference>
<dbReference type="Bgee" id="ENSMUSG00000029371">
    <property type="expression patterns" value="Expressed in right lobe of liver and 61 other cell types or tissues"/>
</dbReference>
<dbReference type="GO" id="GO:0005615">
    <property type="term" value="C:extracellular space"/>
    <property type="evidence" value="ECO:0007669"/>
    <property type="project" value="UniProtKB-KW"/>
</dbReference>
<dbReference type="GO" id="GO:0008009">
    <property type="term" value="F:chemokine activity"/>
    <property type="evidence" value="ECO:0007669"/>
    <property type="project" value="Ensembl"/>
</dbReference>
<dbReference type="GO" id="GO:0140367">
    <property type="term" value="P:antibacterial innate immune response"/>
    <property type="evidence" value="ECO:0000314"/>
    <property type="project" value="GO_Central"/>
</dbReference>
<dbReference type="GO" id="GO:0061844">
    <property type="term" value="P:antimicrobial humoral immune response mediated by antimicrobial peptide"/>
    <property type="evidence" value="ECO:0007669"/>
    <property type="project" value="Ensembl"/>
</dbReference>
<dbReference type="GO" id="GO:0071222">
    <property type="term" value="P:cellular response to lipopolysaccharide"/>
    <property type="evidence" value="ECO:0007669"/>
    <property type="project" value="Ensembl"/>
</dbReference>
<dbReference type="GO" id="GO:0070098">
    <property type="term" value="P:chemokine-mediated signaling pathway"/>
    <property type="evidence" value="ECO:0000314"/>
    <property type="project" value="GO_Central"/>
</dbReference>
<dbReference type="GO" id="GO:0006954">
    <property type="term" value="P:inflammatory response"/>
    <property type="evidence" value="ECO:0007669"/>
    <property type="project" value="UniProtKB-KW"/>
</dbReference>
<dbReference type="GO" id="GO:0001776">
    <property type="term" value="P:leukocyte homeostasis"/>
    <property type="evidence" value="ECO:0000315"/>
    <property type="project" value="MGI"/>
</dbReference>
<dbReference type="GO" id="GO:0042119">
    <property type="term" value="P:neutrophil activation"/>
    <property type="evidence" value="ECO:0007669"/>
    <property type="project" value="Ensembl"/>
</dbReference>
<dbReference type="GO" id="GO:0030593">
    <property type="term" value="P:neutrophil chemotaxis"/>
    <property type="evidence" value="ECO:0007669"/>
    <property type="project" value="Ensembl"/>
</dbReference>
<dbReference type="GO" id="GO:0032642">
    <property type="term" value="P:regulation of chemokine production"/>
    <property type="evidence" value="ECO:0000315"/>
    <property type="project" value="MGI"/>
</dbReference>
<dbReference type="GO" id="GO:0070951">
    <property type="term" value="P:regulation of neutrophil mediated killing of gram-negative bacterium"/>
    <property type="evidence" value="ECO:0000315"/>
    <property type="project" value="MGI"/>
</dbReference>
<dbReference type="GO" id="GO:0032496">
    <property type="term" value="P:response to lipopolysaccharide"/>
    <property type="evidence" value="ECO:0000315"/>
    <property type="project" value="MGI"/>
</dbReference>
<dbReference type="CDD" id="cd00273">
    <property type="entry name" value="Chemokine_CXC"/>
    <property type="match status" value="1"/>
</dbReference>
<dbReference type="FunFam" id="2.40.50.40:FF:000004">
    <property type="entry name" value="C-X-C motif chemokine"/>
    <property type="match status" value="1"/>
</dbReference>
<dbReference type="Gene3D" id="2.40.50.40">
    <property type="match status" value="1"/>
</dbReference>
<dbReference type="InterPro" id="IPR039809">
    <property type="entry name" value="Chemokine_b/g/d"/>
</dbReference>
<dbReference type="InterPro" id="IPR001089">
    <property type="entry name" value="Chemokine_CXC"/>
</dbReference>
<dbReference type="InterPro" id="IPR018048">
    <property type="entry name" value="Chemokine_CXC_CS"/>
</dbReference>
<dbReference type="InterPro" id="IPR001811">
    <property type="entry name" value="Chemokine_IL8-like_dom"/>
</dbReference>
<dbReference type="InterPro" id="IPR033899">
    <property type="entry name" value="CXC_Chemokine_domain"/>
</dbReference>
<dbReference type="InterPro" id="IPR036048">
    <property type="entry name" value="Interleukin_8-like_sf"/>
</dbReference>
<dbReference type="PANTHER" id="PTHR12015:SF201">
    <property type="entry name" value="C-X-C MOTIF CHEMOKINE 6"/>
    <property type="match status" value="1"/>
</dbReference>
<dbReference type="PANTHER" id="PTHR12015">
    <property type="entry name" value="SMALL INDUCIBLE CYTOKINE A"/>
    <property type="match status" value="1"/>
</dbReference>
<dbReference type="Pfam" id="PF00048">
    <property type="entry name" value="IL8"/>
    <property type="match status" value="1"/>
</dbReference>
<dbReference type="PRINTS" id="PR00436">
    <property type="entry name" value="INTERLEUKIN8"/>
</dbReference>
<dbReference type="PRINTS" id="PR00437">
    <property type="entry name" value="SMALLCYTKCXC"/>
</dbReference>
<dbReference type="SMART" id="SM00199">
    <property type="entry name" value="SCY"/>
    <property type="match status" value="1"/>
</dbReference>
<dbReference type="SUPFAM" id="SSF54117">
    <property type="entry name" value="Interleukin 8-like chemokines"/>
    <property type="match status" value="1"/>
</dbReference>
<dbReference type="PROSITE" id="PS00471">
    <property type="entry name" value="SMALL_CYTOKINES_CXC"/>
    <property type="match status" value="1"/>
</dbReference>